<reference key="1">
    <citation type="journal article" date="2002" name="Development">
        <title>Pax6 regulates specification of ventral neurone subtypes in the hindbrain by establishing progenitor domains.</title>
        <authorList>
            <person name="Takahashi M."/>
            <person name="Osumi N."/>
        </authorList>
    </citation>
    <scope>NUCLEOTIDE SEQUENCE [MRNA]</scope>
    <scope>INDUCTION</scope>
    <source>
        <tissue>Embryo</tissue>
    </source>
</reference>
<evidence type="ECO:0000250" key="1"/>
<evidence type="ECO:0000255" key="2">
    <source>
        <dbReference type="PROSITE-ProRule" id="PRU00108"/>
    </source>
</evidence>
<evidence type="ECO:0000256" key="3">
    <source>
        <dbReference type="SAM" id="MobiDB-lite"/>
    </source>
</evidence>
<evidence type="ECO:0000269" key="4">
    <source>
    </source>
</evidence>
<evidence type="ECO:0000305" key="5"/>
<feature type="chain" id="PRO_0000302844" description="Homeobox protein DBX1">
    <location>
        <begin position="1"/>
        <end position="335"/>
    </location>
</feature>
<feature type="DNA-binding region" description="Homeobox" evidence="2">
    <location>
        <begin position="181"/>
        <end position="240"/>
    </location>
</feature>
<feature type="region of interest" description="Disordered" evidence="3">
    <location>
        <begin position="56"/>
        <end position="102"/>
    </location>
</feature>
<feature type="region of interest" description="Disordered" evidence="3">
    <location>
        <begin position="240"/>
        <end position="335"/>
    </location>
</feature>
<feature type="compositionally biased region" description="Low complexity" evidence="3">
    <location>
        <begin position="83"/>
        <end position="95"/>
    </location>
</feature>
<feature type="compositionally biased region" description="Low complexity" evidence="3">
    <location>
        <begin position="299"/>
        <end position="317"/>
    </location>
</feature>
<feature type="compositionally biased region" description="Acidic residues" evidence="3">
    <location>
        <begin position="318"/>
        <end position="335"/>
    </location>
</feature>
<accession>Q5NSW5</accession>
<name>DBX1_RAT</name>
<proteinExistence type="evidence at transcript level"/>
<keyword id="KW-0217">Developmental protein</keyword>
<keyword id="KW-0238">DNA-binding</keyword>
<keyword id="KW-0371">Homeobox</keyword>
<keyword id="KW-0539">Nucleus</keyword>
<keyword id="KW-1185">Reference proteome</keyword>
<comment type="function">
    <text evidence="1">Could have a role in patterning the central nervous system during embryogenesis. Has a key role in regulating the distinct phenotypic features that distinguish two major classes of ventral interneurons, V0 and V1 neurons. Regulates the transcription factor profile, neurotransmitter phenotype, intraspinal migratory path and axonal trajectory of V0 neurons, features that differentiate them from an adjacent set of V1 neurons (By similarity).</text>
</comment>
<comment type="subcellular location">
    <subcellularLocation>
        <location evidence="2">Nucleus</location>
    </subcellularLocation>
</comment>
<comment type="induction">
    <text evidence="4">By Pax6.</text>
</comment>
<comment type="similarity">
    <text evidence="5">Belongs to the H2.0 homeobox family.</text>
</comment>
<gene>
    <name type="primary">Dbx1</name>
</gene>
<dbReference type="EMBL" id="AB197138">
    <property type="protein sequence ID" value="BAD83364.1"/>
    <property type="molecule type" value="mRNA"/>
</dbReference>
<dbReference type="RefSeq" id="NP_001009644.1">
    <property type="nucleotide sequence ID" value="NM_001009644.2"/>
</dbReference>
<dbReference type="SMR" id="Q5NSW5"/>
<dbReference type="FunCoup" id="Q5NSW5">
    <property type="interactions" value="107"/>
</dbReference>
<dbReference type="STRING" id="10116.ENSRNOP00000019739"/>
<dbReference type="PhosphoSitePlus" id="Q5NSW5"/>
<dbReference type="PaxDb" id="10116-ENSRNOP00000019739"/>
<dbReference type="Ensembl" id="ENSRNOT00000019739.3">
    <property type="protein sequence ID" value="ENSRNOP00000019739.1"/>
    <property type="gene ID" value="ENSRNOG00000014706.3"/>
</dbReference>
<dbReference type="GeneID" id="292934"/>
<dbReference type="KEGG" id="rno:292934"/>
<dbReference type="UCSC" id="RGD:1308896">
    <property type="organism name" value="rat"/>
</dbReference>
<dbReference type="AGR" id="RGD:1308896"/>
<dbReference type="CTD" id="120237"/>
<dbReference type="RGD" id="1308896">
    <property type="gene designation" value="Dbx1"/>
</dbReference>
<dbReference type="eggNOG" id="KOG0488">
    <property type="taxonomic scope" value="Eukaryota"/>
</dbReference>
<dbReference type="GeneTree" id="ENSGT00950000183093"/>
<dbReference type="HOGENOM" id="CLU_053401_0_0_1"/>
<dbReference type="InParanoid" id="Q5NSW5"/>
<dbReference type="OMA" id="RHSLAYH"/>
<dbReference type="OrthoDB" id="10048112at2759"/>
<dbReference type="PhylomeDB" id="Q5NSW5"/>
<dbReference type="TreeFam" id="TF350735"/>
<dbReference type="PRO" id="PR:Q5NSW5"/>
<dbReference type="Proteomes" id="UP000002494">
    <property type="component" value="Chromosome 1"/>
</dbReference>
<dbReference type="GO" id="GO:0005634">
    <property type="term" value="C:nucleus"/>
    <property type="evidence" value="ECO:0007669"/>
    <property type="project" value="UniProtKB-SubCell"/>
</dbReference>
<dbReference type="GO" id="GO:0003677">
    <property type="term" value="F:DNA binding"/>
    <property type="evidence" value="ECO:0007669"/>
    <property type="project" value="UniProtKB-KW"/>
</dbReference>
<dbReference type="GO" id="GO:0000981">
    <property type="term" value="F:DNA-binding transcription factor activity, RNA polymerase II-specific"/>
    <property type="evidence" value="ECO:0007669"/>
    <property type="project" value="InterPro"/>
</dbReference>
<dbReference type="GO" id="GO:0021515">
    <property type="term" value="P:cell differentiation in spinal cord"/>
    <property type="evidence" value="ECO:0000318"/>
    <property type="project" value="GO_Central"/>
</dbReference>
<dbReference type="GO" id="GO:0006357">
    <property type="term" value="P:regulation of transcription by RNA polymerase II"/>
    <property type="evidence" value="ECO:0000266"/>
    <property type="project" value="RGD"/>
</dbReference>
<dbReference type="GO" id="GO:0021521">
    <property type="term" value="P:ventral spinal cord interneuron specification"/>
    <property type="evidence" value="ECO:0000266"/>
    <property type="project" value="RGD"/>
</dbReference>
<dbReference type="CDD" id="cd00086">
    <property type="entry name" value="homeodomain"/>
    <property type="match status" value="1"/>
</dbReference>
<dbReference type="FunFam" id="1.10.10.60:FF:000177">
    <property type="entry name" value="Homeobox protein DBX1"/>
    <property type="match status" value="1"/>
</dbReference>
<dbReference type="Gene3D" id="1.10.10.60">
    <property type="entry name" value="Homeodomain-like"/>
    <property type="match status" value="1"/>
</dbReference>
<dbReference type="InterPro" id="IPR051662">
    <property type="entry name" value="H2.0_Homeobox_NeuralPatt"/>
</dbReference>
<dbReference type="InterPro" id="IPR001356">
    <property type="entry name" value="HD"/>
</dbReference>
<dbReference type="InterPro" id="IPR020479">
    <property type="entry name" value="HD_metazoa"/>
</dbReference>
<dbReference type="InterPro" id="IPR017970">
    <property type="entry name" value="Homeobox_CS"/>
</dbReference>
<dbReference type="InterPro" id="IPR009057">
    <property type="entry name" value="Homeodomain-like_sf"/>
</dbReference>
<dbReference type="InterPro" id="IPR000047">
    <property type="entry name" value="HTH_motif"/>
</dbReference>
<dbReference type="PANTHER" id="PTHR24331">
    <property type="entry name" value="DBX"/>
    <property type="match status" value="1"/>
</dbReference>
<dbReference type="PANTHER" id="PTHR24331:SF6">
    <property type="entry name" value="HOMEOBOX PROTEIN DBX1"/>
    <property type="match status" value="1"/>
</dbReference>
<dbReference type="Pfam" id="PF00046">
    <property type="entry name" value="Homeodomain"/>
    <property type="match status" value="1"/>
</dbReference>
<dbReference type="PRINTS" id="PR00024">
    <property type="entry name" value="HOMEOBOX"/>
</dbReference>
<dbReference type="PRINTS" id="PR00031">
    <property type="entry name" value="HTHREPRESSR"/>
</dbReference>
<dbReference type="SMART" id="SM00389">
    <property type="entry name" value="HOX"/>
    <property type="match status" value="1"/>
</dbReference>
<dbReference type="SUPFAM" id="SSF46689">
    <property type="entry name" value="Homeodomain-like"/>
    <property type="match status" value="1"/>
</dbReference>
<dbReference type="PROSITE" id="PS00027">
    <property type="entry name" value="HOMEOBOX_1"/>
    <property type="match status" value="1"/>
</dbReference>
<dbReference type="PROSITE" id="PS50071">
    <property type="entry name" value="HOMEOBOX_2"/>
    <property type="match status" value="1"/>
</dbReference>
<protein>
    <recommendedName>
        <fullName>Homeobox protein DBX1</fullName>
    </recommendedName>
    <alternativeName>
        <fullName>Developing brain homeobox protein 1</fullName>
    </alternativeName>
</protein>
<sequence>MMFPGLLAPPAGYPSLLRPTPTLTLPQSLQSAFSGHSSFLVEDLIRISRPPTYLPRSIPTASLSPPRQEAPTALADSGTSDLGSPGSGSRRGSSPQTALSPASEPTFLKFGVNAILSSAPRRETSPALLQSPPPKTFAFPYFEGSFQPFIRSSYFPASSSVVPIPGTFSWPLAARGKPRRGMLRRAVFSDVQRKALEKTFQKQKYISKPDRKKLASKLGLKDSQVKIWFQNRRMKWRNSKERELLSSGGCREQTLPTKLNPHPDLSDVGQKGPGDEEEDSPGASLAYHAPPDPRHLLEGPLPASPAHSSSPGKPSDFSDSDEDEEGEEDEEITVS</sequence>
<organism>
    <name type="scientific">Rattus norvegicus</name>
    <name type="common">Rat</name>
    <dbReference type="NCBI Taxonomy" id="10116"/>
    <lineage>
        <taxon>Eukaryota</taxon>
        <taxon>Metazoa</taxon>
        <taxon>Chordata</taxon>
        <taxon>Craniata</taxon>
        <taxon>Vertebrata</taxon>
        <taxon>Euteleostomi</taxon>
        <taxon>Mammalia</taxon>
        <taxon>Eutheria</taxon>
        <taxon>Euarchontoglires</taxon>
        <taxon>Glires</taxon>
        <taxon>Rodentia</taxon>
        <taxon>Myomorpha</taxon>
        <taxon>Muroidea</taxon>
        <taxon>Muridae</taxon>
        <taxon>Murinae</taxon>
        <taxon>Rattus</taxon>
    </lineage>
</organism>